<reference key="1">
    <citation type="journal article" date="2000" name="J. Biol. Chem.">
        <title>Sequence-specific DNA recognition by the Myb-like domain of plant telomeric protein RTBP1.</title>
        <authorList>
            <person name="Yu E.Y."/>
            <person name="Kim S.E."/>
            <person name="Kim J.H."/>
            <person name="Ko J.H."/>
            <person name="Cho M.H."/>
            <person name="Chung I.K."/>
        </authorList>
    </citation>
    <scope>NUCLEOTIDE SEQUENCE [MRNA]</scope>
    <scope>FUNCTION</scope>
    <scope>HOMODIMERIZATION</scope>
    <scope>TISSUE SPECIFICITY</scope>
</reference>
<reference key="2">
    <citation type="journal article" date="2005" name="Nature">
        <title>The map-based sequence of the rice genome.</title>
        <authorList>
            <consortium name="International rice genome sequencing project (IRGSP)"/>
        </authorList>
    </citation>
    <scope>NUCLEOTIDE SEQUENCE [LARGE SCALE GENOMIC DNA]</scope>
    <source>
        <strain>cv. Nipponbare</strain>
    </source>
</reference>
<reference key="3">
    <citation type="journal article" date="2008" name="Nucleic Acids Res.">
        <title>The rice annotation project database (RAP-DB): 2008 update.</title>
        <authorList>
            <consortium name="The rice annotation project (RAP)"/>
        </authorList>
    </citation>
    <scope>GENOME REANNOTATION</scope>
    <source>
        <strain>cv. Nipponbare</strain>
    </source>
</reference>
<reference key="4">
    <citation type="journal article" date="2013" name="Rice">
        <title>Improvement of the Oryza sativa Nipponbare reference genome using next generation sequence and optical map data.</title>
        <authorList>
            <person name="Kawahara Y."/>
            <person name="de la Bastide M."/>
            <person name="Hamilton J.P."/>
            <person name="Kanamori H."/>
            <person name="McCombie W.R."/>
            <person name="Ouyang S."/>
            <person name="Schwartz D.C."/>
            <person name="Tanaka T."/>
            <person name="Wu J."/>
            <person name="Zhou S."/>
            <person name="Childs K.L."/>
            <person name="Davidson R.M."/>
            <person name="Lin H."/>
            <person name="Quesada-Ocampo L."/>
            <person name="Vaillancourt B."/>
            <person name="Sakai H."/>
            <person name="Lee S.S."/>
            <person name="Kim J."/>
            <person name="Numa H."/>
            <person name="Itoh T."/>
            <person name="Buell C.R."/>
            <person name="Matsumoto T."/>
        </authorList>
    </citation>
    <scope>GENOME REANNOTATION</scope>
    <source>
        <strain>cv. Nipponbare</strain>
    </source>
</reference>
<reference key="5">
    <citation type="journal article" date="2007" name="Plant Cell">
        <title>Suppression of RICE TELOMERE BINDING PROTEIN 1 results in severe and gradual developmental defects accompanied by genome instability in rice.</title>
        <authorList>
            <person name="Hong J.-P."/>
            <person name="Byun M.Y."/>
            <person name="Koo D.-H."/>
            <person name="An K."/>
            <person name="Bang J.-W."/>
            <person name="Chung I.K."/>
            <person name="An G."/>
            <person name="Kim W.T."/>
        </authorList>
    </citation>
    <scope>FUNCTION</scope>
    <scope>DISRUPTION PHENOTYPE</scope>
</reference>
<reference key="6">
    <citation type="journal article" date="2009" name="Biochemistry">
        <title>Solution structure of the DNA binding domain of rice telomere binding protein RTBP1.</title>
        <authorList>
            <person name="Ko S."/>
            <person name="Yu E.Y."/>
            <person name="Shin J."/>
            <person name="Yoo H.H."/>
            <person name="Tanaka T."/>
            <person name="Kim W.T."/>
            <person name="Cho H.-S."/>
            <person name="Lee W."/>
            <person name="Chung I.K."/>
        </authorList>
    </citation>
    <scope>STRUCTURE BY NMR OF 506-615</scope>
    <scope>REGION</scope>
</reference>
<keyword id="KW-0002">3D-structure</keyword>
<keyword id="KW-0158">Chromosome</keyword>
<keyword id="KW-0238">DNA-binding</keyword>
<keyword id="KW-1185">Reference proteome</keyword>
<keyword id="KW-0779">Telomere</keyword>
<name>TBP1_ORYSJ</name>
<gene>
    <name type="primary">TBP1</name>
    <name type="ordered locus">Os02g0817800</name>
    <name type="ordered locus">LOC_Os02g57270</name>
    <name type="ORF">OJ1136_C12.18-1</name>
    <name type="ORF">OJ1136_C12.18-2</name>
    <name type="ORF">OJ1202_E07.1-1</name>
    <name type="ORF">OJ1202_E07.1-2</name>
</gene>
<evidence type="ECO:0000255" key="1">
    <source>
        <dbReference type="PROSITE-ProRule" id="PRU00214"/>
    </source>
</evidence>
<evidence type="ECO:0000255" key="2">
    <source>
        <dbReference type="PROSITE-ProRule" id="PRU00625"/>
    </source>
</evidence>
<evidence type="ECO:0000256" key="3">
    <source>
        <dbReference type="SAM" id="MobiDB-lite"/>
    </source>
</evidence>
<evidence type="ECO:0000269" key="4">
    <source>
    </source>
</evidence>
<evidence type="ECO:0000269" key="5">
    <source>
    </source>
</evidence>
<evidence type="ECO:0000305" key="6"/>
<evidence type="ECO:0007829" key="7">
    <source>
        <dbReference type="PDB" id="2ROH"/>
    </source>
</evidence>
<protein>
    <recommendedName>
        <fullName>Telomere-binding protein 1</fullName>
    </recommendedName>
    <alternativeName>
        <fullName>Protein RTBP1</fullName>
    </alternativeName>
</protein>
<feature type="chain" id="PRO_0000387498" description="Telomere-binding protein 1">
    <location>
        <begin position="1"/>
        <end position="633"/>
    </location>
</feature>
<feature type="domain" description="Ubiquitin-like" evidence="1">
    <location>
        <begin position="351"/>
        <end position="430"/>
    </location>
</feature>
<feature type="domain" description="HTH myb-type" evidence="2">
    <location>
        <begin position="529"/>
        <end position="588"/>
    </location>
</feature>
<feature type="domain" description="SANT">
    <location>
        <begin position="534" status="uncertain"/>
        <end position="584" status="uncertain"/>
    </location>
</feature>
<feature type="DNA-binding region" description="H-T-H motif" evidence="2">
    <location>
        <begin position="557"/>
        <end position="584"/>
    </location>
</feature>
<feature type="region of interest" description="Disordered" evidence="3">
    <location>
        <begin position="253"/>
        <end position="272"/>
    </location>
</feature>
<feature type="region of interest" description="Sufficient for telomeric DNA binding">
    <location>
        <begin position="506"/>
        <end position="615"/>
    </location>
</feature>
<feature type="compositionally biased region" description="Polar residues" evidence="3">
    <location>
        <begin position="263"/>
        <end position="272"/>
    </location>
</feature>
<feature type="sequence conflict" description="In Ref. 1; AAF97508." evidence="6" ref="1">
    <original>C</original>
    <variation>Y</variation>
    <location>
        <position position="416"/>
    </location>
</feature>
<feature type="helix" evidence="7">
    <location>
        <begin position="539"/>
        <end position="552"/>
    </location>
</feature>
<feature type="strand" evidence="7">
    <location>
        <begin position="553"/>
        <end position="555"/>
    </location>
</feature>
<feature type="helix" evidence="7">
    <location>
        <begin position="557"/>
        <end position="565"/>
    </location>
</feature>
<feature type="strand" evidence="7">
    <location>
        <begin position="566"/>
        <end position="568"/>
    </location>
</feature>
<feature type="helix" evidence="7">
    <location>
        <begin position="573"/>
        <end position="588"/>
    </location>
</feature>
<feature type="turn" evidence="7">
    <location>
        <begin position="591"/>
        <end position="593"/>
    </location>
</feature>
<feature type="helix" evidence="7">
    <location>
        <begin position="601"/>
        <end position="615"/>
    </location>
</feature>
<accession>Q9LL45</accession>
<accession>Q6K9S3</accession>
<accession>Q6K9S4</accession>
<organism>
    <name type="scientific">Oryza sativa subsp. japonica</name>
    <name type="common">Rice</name>
    <dbReference type="NCBI Taxonomy" id="39947"/>
    <lineage>
        <taxon>Eukaryota</taxon>
        <taxon>Viridiplantae</taxon>
        <taxon>Streptophyta</taxon>
        <taxon>Embryophyta</taxon>
        <taxon>Tracheophyta</taxon>
        <taxon>Spermatophyta</taxon>
        <taxon>Magnoliopsida</taxon>
        <taxon>Liliopsida</taxon>
        <taxon>Poales</taxon>
        <taxon>Poaceae</taxon>
        <taxon>BOP clade</taxon>
        <taxon>Oryzoideae</taxon>
        <taxon>Oryzeae</taxon>
        <taxon>Oryzinae</taxon>
        <taxon>Oryza</taxon>
        <taxon>Oryza sativa</taxon>
    </lineage>
</organism>
<dbReference type="EMBL" id="AF242298">
    <property type="protein sequence ID" value="AAF97508.1"/>
    <property type="molecule type" value="mRNA"/>
</dbReference>
<dbReference type="EMBL" id="AP004028">
    <property type="protein sequence ID" value="BAD21526.1"/>
    <property type="status" value="ALT_SEQ"/>
    <property type="molecule type" value="Genomic_DNA"/>
</dbReference>
<dbReference type="EMBL" id="AP004028">
    <property type="protein sequence ID" value="BAD21527.1"/>
    <property type="status" value="ALT_SEQ"/>
    <property type="molecule type" value="Genomic_DNA"/>
</dbReference>
<dbReference type="EMBL" id="AP004048">
    <property type="protein sequence ID" value="BAD22954.1"/>
    <property type="status" value="ALT_SEQ"/>
    <property type="molecule type" value="Genomic_DNA"/>
</dbReference>
<dbReference type="EMBL" id="AP004048">
    <property type="protein sequence ID" value="BAD22955.1"/>
    <property type="status" value="ALT_SEQ"/>
    <property type="molecule type" value="Genomic_DNA"/>
</dbReference>
<dbReference type="EMBL" id="AP008208">
    <property type="protein sequence ID" value="BAF10438.1"/>
    <property type="status" value="ALT_SEQ"/>
    <property type="molecule type" value="Genomic_DNA"/>
</dbReference>
<dbReference type="EMBL" id="AP014958">
    <property type="status" value="NOT_ANNOTATED_CDS"/>
    <property type="molecule type" value="Genomic_DNA"/>
</dbReference>
<dbReference type="RefSeq" id="XP_015625433.1">
    <property type="nucleotide sequence ID" value="XM_015769947.1"/>
</dbReference>
<dbReference type="RefSeq" id="XP_015625434.1">
    <property type="nucleotide sequence ID" value="XM_015769948.1"/>
</dbReference>
<dbReference type="PDB" id="2ROH">
    <property type="method" value="NMR"/>
    <property type="chains" value="A=506-615"/>
</dbReference>
<dbReference type="PDBsum" id="2ROH"/>
<dbReference type="BMRB" id="Q9LL45"/>
<dbReference type="SMR" id="Q9LL45"/>
<dbReference type="FunCoup" id="Q9LL45">
    <property type="interactions" value="764"/>
</dbReference>
<dbReference type="STRING" id="39947.Q9LL45"/>
<dbReference type="PaxDb" id="39947-Q9LL45"/>
<dbReference type="EnsemblPlants" id="Os02t0817800-03">
    <property type="protein sequence ID" value="Os02t0817800-03"/>
    <property type="gene ID" value="Os02g0817800"/>
</dbReference>
<dbReference type="Gramene" id="Os02t0817800-03">
    <property type="protein sequence ID" value="Os02t0817800-03"/>
    <property type="gene ID" value="Os02g0817800"/>
</dbReference>
<dbReference type="KEGG" id="dosa:Os02g0817800"/>
<dbReference type="eggNOG" id="ENOG502QPSZ">
    <property type="taxonomic scope" value="Eukaryota"/>
</dbReference>
<dbReference type="HOGENOM" id="CLU_768125_0_0_1"/>
<dbReference type="InParanoid" id="Q9LL45"/>
<dbReference type="OrthoDB" id="2020981at2759"/>
<dbReference type="EvolutionaryTrace" id="Q9LL45"/>
<dbReference type="Proteomes" id="UP000000763">
    <property type="component" value="Chromosome 2"/>
</dbReference>
<dbReference type="Proteomes" id="UP000059680">
    <property type="component" value="Chromosome 2"/>
</dbReference>
<dbReference type="ExpressionAtlas" id="Q9LL45">
    <property type="expression patterns" value="baseline and differential"/>
</dbReference>
<dbReference type="GO" id="GO:0000781">
    <property type="term" value="C:chromosome, telomeric region"/>
    <property type="evidence" value="ECO:0000305"/>
    <property type="project" value="UniProtKB"/>
</dbReference>
<dbReference type="GO" id="GO:0042803">
    <property type="term" value="F:protein homodimerization activity"/>
    <property type="evidence" value="ECO:0000314"/>
    <property type="project" value="UniProtKB"/>
</dbReference>
<dbReference type="GO" id="GO:0042162">
    <property type="term" value="F:telomeric DNA binding"/>
    <property type="evidence" value="ECO:0000314"/>
    <property type="project" value="UniProtKB"/>
</dbReference>
<dbReference type="GO" id="GO:0032204">
    <property type="term" value="P:regulation of telomere maintenance"/>
    <property type="evidence" value="ECO:0000315"/>
    <property type="project" value="UniProtKB"/>
</dbReference>
<dbReference type="CDD" id="cd11660">
    <property type="entry name" value="SANT_TRF"/>
    <property type="match status" value="1"/>
</dbReference>
<dbReference type="CDD" id="cd17039">
    <property type="entry name" value="Ubl_ubiquitin_like"/>
    <property type="match status" value="1"/>
</dbReference>
<dbReference type="Gene3D" id="1.10.246.220">
    <property type="match status" value="1"/>
</dbReference>
<dbReference type="Gene3D" id="3.10.20.90">
    <property type="entry name" value="Phosphatidylinositol 3-kinase Catalytic Subunit, Chain A, domain 1"/>
    <property type="match status" value="1"/>
</dbReference>
<dbReference type="InterPro" id="IPR009057">
    <property type="entry name" value="Homeodomain-like_sf"/>
</dbReference>
<dbReference type="InterPro" id="IPR017930">
    <property type="entry name" value="Myb_dom"/>
</dbReference>
<dbReference type="InterPro" id="IPR001005">
    <property type="entry name" value="SANT/Myb"/>
</dbReference>
<dbReference type="InterPro" id="IPR031105">
    <property type="entry name" value="TRP_plant"/>
</dbReference>
<dbReference type="InterPro" id="IPR000626">
    <property type="entry name" value="Ubiquitin-like_dom"/>
</dbReference>
<dbReference type="InterPro" id="IPR029071">
    <property type="entry name" value="Ubiquitin-like_domsf"/>
</dbReference>
<dbReference type="PANTHER" id="PTHR21717:SF72">
    <property type="entry name" value="TELOMERE-BINDING PROTEIN 1"/>
    <property type="match status" value="1"/>
</dbReference>
<dbReference type="PANTHER" id="PTHR21717">
    <property type="entry name" value="TELOMERIC REPEAT BINDING PROTEIN"/>
    <property type="match status" value="1"/>
</dbReference>
<dbReference type="Pfam" id="PF23603">
    <property type="entry name" value="Ubiquitin_TPR1"/>
    <property type="match status" value="1"/>
</dbReference>
<dbReference type="SMART" id="SM00717">
    <property type="entry name" value="SANT"/>
    <property type="match status" value="1"/>
</dbReference>
<dbReference type="SUPFAM" id="SSF46689">
    <property type="entry name" value="Homeodomain-like"/>
    <property type="match status" value="1"/>
</dbReference>
<dbReference type="SUPFAM" id="SSF54236">
    <property type="entry name" value="Ubiquitin-like"/>
    <property type="match status" value="1"/>
</dbReference>
<dbReference type="PROSITE" id="PS51294">
    <property type="entry name" value="HTH_MYB"/>
    <property type="match status" value="1"/>
</dbReference>
<dbReference type="PROSITE" id="PS50053">
    <property type="entry name" value="UBIQUITIN_2"/>
    <property type="match status" value="1"/>
</dbReference>
<comment type="function">
    <text evidence="4 5">Binds the telomeric double-stranded 5'TTTAGGG-3' repeat and regulates telomere length and structure.</text>
</comment>
<comment type="subunit">
    <text>Homodimer.</text>
</comment>
<comment type="subcellular location">
    <subcellularLocation>
        <location evidence="6">Chromosome</location>
        <location evidence="6">Telomere</location>
    </subcellularLocation>
</comment>
<comment type="tissue specificity">
    <text evidence="4">Ubiquitous.</text>
</comment>
<comment type="disruption phenotype">
    <text evidence="5">Severe developmental abnormalities of vegetative organs and impaired reproductive organ formation. Chromosomal fusion in mother pollen cells. Increased telomere length and frequency of anaphase bridges containing telomeric repeat DNA.</text>
</comment>
<comment type="sequence caution" evidence="6">
    <conflict type="erroneous gene model prediction">
        <sequence resource="EMBL-CDS" id="BAD21526"/>
    </conflict>
</comment>
<comment type="sequence caution" evidence="6">
    <conflict type="erroneous gene model prediction">
        <sequence resource="EMBL-CDS" id="BAD21527"/>
    </conflict>
</comment>
<comment type="sequence caution" evidence="6">
    <conflict type="erroneous gene model prediction">
        <sequence resource="EMBL-CDS" id="BAD22954"/>
    </conflict>
</comment>
<comment type="sequence caution" evidence="6">
    <conflict type="erroneous gene model prediction">
        <sequence resource="EMBL-CDS" id="BAD22955"/>
    </conflict>
</comment>
<comment type="sequence caution" evidence="6">
    <conflict type="erroneous gene model prediction">
        <sequence resource="EMBL-CDS" id="BAF10438"/>
    </conflict>
</comment>
<sequence>MVLQKRLDYGSHGHRAPIKPRVATLAPVKRSTRIRKKQMYALDLLATAAEKLLADQDNLSSGPNINETPEGYVTSMKPVKAEQFDEAFPLRSVAVKKDDCKGCTVGCAGICGFLRQANMCLAENSSTQNLADSVLESLTAKPDVLAKDSFVSSKKSCRLGFGLGTIPEYGSVGVCQPWSTRSAEVKQVHRARPTAIRSQEDSDAAALCALVETMDLDTKPLAEASSGSNSGVHICGPDRGHNSHPSCLAKVQHAADRDDDENSSGCVHPSTSGNNRGYIPHYIGDRRIRRLFASRLRKAARNRICGEMSCKGNKLSLCEKKMPTTRRRVQQTTLKRKRLAQLYSEKSSDEVKLTIKSFNIPELLIEIPENATVGSLKKTVSDAVTTIIERGLRVGILLQGKNIQNDNKTLRQAGICRGKKLNDIGFTLECEAGQDSHPGVIVPEEMDFVGASVVDKSATVKCEEPAENQQLMQDFPGCSLSDPGSVDYPVEWSTQETSASSQAIVPFADPNSLALANVPLSRSKRPDFGQRRIRRPFTVAEVELLVEAVEHLGTGRWRDVKFRAFENVHHRTYVDLKDKWKTLVHTASIAPQQRRGAPVPQELLDRVLAAQAYWSEQQAKLHGDPPVPEICPT</sequence>
<proteinExistence type="evidence at protein level"/>